<reference key="1">
    <citation type="journal article" date="2006" name="FEBS J.">
        <title>Novel gamma-carboxyglutamic acid-containing peptides from the venom of Conus textile.</title>
        <authorList>
            <person name="Czerwiec E."/>
            <person name="Kalume D.E."/>
            <person name="Roepstorff P."/>
            <person name="Hambe B."/>
            <person name="Furie B."/>
            <person name="Furie B.C."/>
            <person name="Stenflo J."/>
        </authorList>
    </citation>
    <scope>NUCLEOTIDE SEQUENCE [MRNA]</scope>
    <scope>PROTEIN SEQUENCE OF 47-71</scope>
    <scope>MASS SPECTROMETRY</scope>
    <scope>HYDROXYLATION AT PRO-58</scope>
    <scope>GAMMA-CARBOXYGLUTAMATION AT GLU-56</scope>
    <scope>BROMINATION</scope>
    <scope>AMIDATION AT SER-71</scope>
    <source>
        <tissue>Venom</tissue>
        <tissue>Venom gland</tissue>
    </source>
</reference>
<sequence length="72" mass="8210">MEKLIILLLVAAVLMSTQALFQEKRTMKKIDFLSKGKADAEKQRKRNCSDDWQYCESPSDCCSWDCDVVCSG</sequence>
<evidence type="ECO:0000250" key="1"/>
<evidence type="ECO:0000255" key="2"/>
<evidence type="ECO:0000269" key="3">
    <source>
    </source>
</evidence>
<evidence type="ECO:0000305" key="4"/>
<comment type="subcellular location">
    <subcellularLocation>
        <location>Secreted</location>
    </subcellularLocation>
</comment>
<comment type="tissue specificity">
    <text>Expressed by the venom duct.</text>
</comment>
<comment type="domain">
    <text evidence="1">The presence of a 'disulfide through disulfide knot' structurally defines this protein as a knottin.</text>
</comment>
<comment type="domain">
    <text>The cysteine framework is VI/VII (C-C-CC-C-C).</text>
</comment>
<comment type="PTM">
    <text evidence="3">Brominated at one of the Trp residues.</text>
</comment>
<comment type="mass spectrometry" mass="2979.7" method="MALDI" evidence="3"/>
<comment type="similarity">
    <text evidence="4">Belongs to the conotoxin O2 superfamily.</text>
</comment>
<accession>P0CJ21</accession>
<feature type="signal peptide" evidence="2">
    <location>
        <begin position="1"/>
        <end position="19"/>
    </location>
</feature>
<feature type="propeptide" id="PRO_0000404790">
    <location>
        <begin position="20"/>
        <end position="44"/>
    </location>
</feature>
<feature type="peptide" id="PRO_0000404791" description="Conotoxin Gla(2)-TxVI/B">
    <location>
        <begin position="47"/>
        <end position="71"/>
    </location>
</feature>
<feature type="modified residue" description="4-carboxyglutamate" evidence="3">
    <location>
        <position position="56"/>
    </location>
</feature>
<feature type="modified residue" description="4-hydroxyproline" evidence="3">
    <location>
        <position position="58"/>
    </location>
</feature>
<feature type="modified residue" description="Serine amide" evidence="3">
    <location>
        <position position="71"/>
    </location>
</feature>
<feature type="disulfide bond" evidence="1">
    <location>
        <begin position="48"/>
        <end position="62"/>
    </location>
</feature>
<feature type="disulfide bond" evidence="1">
    <location>
        <begin position="55"/>
        <end position="66"/>
    </location>
</feature>
<feature type="disulfide bond" evidence="1">
    <location>
        <begin position="61"/>
        <end position="70"/>
    </location>
</feature>
<name>O226B_CONTE</name>
<keyword id="KW-0027">Amidation</keyword>
<keyword id="KW-0102">Bromination</keyword>
<keyword id="KW-0165">Cleavage on pair of basic residues</keyword>
<keyword id="KW-0903">Direct protein sequencing</keyword>
<keyword id="KW-1015">Disulfide bond</keyword>
<keyword id="KW-0301">Gamma-carboxyglutamic acid</keyword>
<keyword id="KW-0379">Hydroxylation</keyword>
<keyword id="KW-0960">Knottin</keyword>
<keyword id="KW-0528">Neurotoxin</keyword>
<keyword id="KW-0964">Secreted</keyword>
<keyword id="KW-0732">Signal</keyword>
<keyword id="KW-0800">Toxin</keyword>
<dbReference type="GO" id="GO:0005576">
    <property type="term" value="C:extracellular region"/>
    <property type="evidence" value="ECO:0007669"/>
    <property type="project" value="UniProtKB-SubCell"/>
</dbReference>
<dbReference type="GO" id="GO:0008200">
    <property type="term" value="F:ion channel inhibitor activity"/>
    <property type="evidence" value="ECO:0007669"/>
    <property type="project" value="InterPro"/>
</dbReference>
<dbReference type="GO" id="GO:0090729">
    <property type="term" value="F:toxin activity"/>
    <property type="evidence" value="ECO:0007669"/>
    <property type="project" value="UniProtKB-KW"/>
</dbReference>
<dbReference type="InterPro" id="IPR004214">
    <property type="entry name" value="Conotoxin"/>
</dbReference>
<dbReference type="Pfam" id="PF02950">
    <property type="entry name" value="Conotoxin"/>
    <property type="match status" value="1"/>
</dbReference>
<proteinExistence type="evidence at protein level"/>
<protein>
    <recommendedName>
        <fullName>Conotoxin Gla(2)-TxVI/B</fullName>
    </recommendedName>
</protein>
<organism>
    <name type="scientific">Conus textile</name>
    <name type="common">Cloth-of-gold cone</name>
    <dbReference type="NCBI Taxonomy" id="6494"/>
    <lineage>
        <taxon>Eukaryota</taxon>
        <taxon>Metazoa</taxon>
        <taxon>Spiralia</taxon>
        <taxon>Lophotrochozoa</taxon>
        <taxon>Mollusca</taxon>
        <taxon>Gastropoda</taxon>
        <taxon>Caenogastropoda</taxon>
        <taxon>Neogastropoda</taxon>
        <taxon>Conoidea</taxon>
        <taxon>Conidae</taxon>
        <taxon>Conus</taxon>
        <taxon>Cylinder</taxon>
    </lineage>
</organism>